<comment type="function">
    <text evidence="4">Part of the tripartite ATP-independent periplasmic (TRAP) transport system involved in the uptake of monocarboxylate 2-oxoacids. This protein specifically binds monocarboxylate 2-oxoacids including pyruvate, 2-oxobutyrate, 2-oxovalerate, 2-oxoisovalerate, 2-oxoisocaproate and 2-oxo-3-methylvalerate. Is not able to bind mannitol.</text>
</comment>
<comment type="activity regulation">
    <text evidence="4">Pyruvate uptake inhibited by 2-oxobutyrate, 2-oxovalerate, 2-oxoisovalerate, 2-oxoisocaproate and 2-oxo-3-methylvalerate.</text>
</comment>
<comment type="subunit">
    <text evidence="2 4">Homodimer. The complex comprises the extracytoplasmic solute receptor protein all3028, and the two putative transmembrane proteins alr3026 and alr3027 (By similarity).</text>
</comment>
<comment type="subcellular location">
    <subcellularLocation>
        <location evidence="1">Periplasm</location>
    </subcellularLocation>
</comment>
<comment type="disruption phenotype">
    <text evidence="4">Impaired pyruvate uptake.</text>
</comment>
<comment type="similarity">
    <text evidence="3">Belongs to the bacterial solute-binding protein 7 family.</text>
</comment>
<sequence>MKRREVLNTAAIATATTALVSCTQTNTSSVQAGLPNVRWRMTTSWPKSLGTFIGAETVAKRVAEMTNGRFKITPFAAGELVPGLQVLDAVQAGTVECGHTSSYYYIGKSPALAFATSVPFGLNAQQQYAWLYQGGGLAAIQKIYANFNVINFPAGSTGAQMGGWFKKEIKSVSDLKGLKMRIPGLGGQVMSRLGVNVQVLPGGEIYLALDRGAIDAAEWVGPYDDEKLGLNKAAQFYYYPGWWEPGPTLDVLVNLNAWNRLPKEYQEIFKTATVEANLTMLNQYDALNGEALTRLLAGGTKLVPYSQEIMQAAQKISFDIFEENASKDAAFKQVYEQWKAFRKQIFAWNRVNELSYENFASSSQ</sequence>
<evidence type="ECO:0000250" key="1">
    <source>
        <dbReference type="UniProtKB" id="P44542"/>
    </source>
</evidence>
<evidence type="ECO:0000250" key="2">
    <source>
        <dbReference type="UniProtKB" id="Q3J1R2"/>
    </source>
</evidence>
<evidence type="ECO:0000255" key="3"/>
<evidence type="ECO:0000269" key="4">
    <source>
    </source>
</evidence>
<evidence type="ECO:0000303" key="5">
    <source>
    </source>
</evidence>
<evidence type="ECO:0000305" key="6"/>
<evidence type="ECO:0000312" key="7">
    <source>
        <dbReference type="EMBL" id="BAB74727.1"/>
    </source>
</evidence>
<name>TMBP_NOSS1</name>
<proteinExistence type="evidence at protein level"/>
<keyword id="KW-0479">Metal-binding</keyword>
<keyword id="KW-0574">Periplasm</keyword>
<keyword id="KW-1185">Reference proteome</keyword>
<keyword id="KW-0732">Signal</keyword>
<keyword id="KW-0915">Sodium</keyword>
<keyword id="KW-0813">Transport</keyword>
<gene>
    <name type="ordered locus">all3028</name>
</gene>
<feature type="signal peptide" evidence="2">
    <location>
        <begin position="1"/>
        <end position="26"/>
    </location>
</feature>
<feature type="chain" id="PRO_0000423665" description="Monocarboxylate 2-oxoacid-binding periplasmic protein all3028" evidence="2">
    <location>
        <begin position="27"/>
        <end position="364"/>
    </location>
</feature>
<feature type="binding site" evidence="2">
    <location>
        <begin position="103"/>
        <end position="104"/>
    </location>
    <ligand>
        <name>substrate</name>
    </ligand>
</feature>
<feature type="binding site" evidence="2">
    <location>
        <position position="160"/>
    </location>
    <ligand>
        <name>Na(+)</name>
        <dbReference type="ChEBI" id="CHEBI:29101"/>
    </ligand>
</feature>
<feature type="binding site" evidence="2">
    <location>
        <position position="160"/>
    </location>
    <ligand>
        <name>substrate</name>
    </ligand>
</feature>
<feature type="binding site" evidence="2">
    <location>
        <position position="181"/>
    </location>
    <ligand>
        <name>substrate</name>
    </ligand>
</feature>
<feature type="binding site" evidence="2">
    <location>
        <position position="218"/>
    </location>
    <ligand>
        <name>Na(+)</name>
        <dbReference type="ChEBI" id="CHEBI:29101"/>
    </ligand>
</feature>
<feature type="binding site" evidence="2">
    <location>
        <position position="219"/>
    </location>
    <ligand>
        <name>Na(+)</name>
        <dbReference type="ChEBI" id="CHEBI:29101"/>
    </ligand>
</feature>
<feature type="binding site" evidence="2">
    <location>
        <position position="244"/>
    </location>
    <ligand>
        <name>Na(+)</name>
        <dbReference type="ChEBI" id="CHEBI:29101"/>
    </ligand>
</feature>
<reference evidence="7" key="1">
    <citation type="journal article" date="2001" name="DNA Res.">
        <title>Complete genomic sequence of the filamentous nitrogen-fixing cyanobacterium Anabaena sp. strain PCC 7120.</title>
        <authorList>
            <person name="Kaneko T."/>
            <person name="Nakamura Y."/>
            <person name="Wolk C.P."/>
            <person name="Kuritz T."/>
            <person name="Sasamoto S."/>
            <person name="Watanabe A."/>
            <person name="Iriguchi M."/>
            <person name="Ishikawa A."/>
            <person name="Kawashima K."/>
            <person name="Kimura T."/>
            <person name="Kishida Y."/>
            <person name="Kohara M."/>
            <person name="Matsumoto M."/>
            <person name="Matsuno A."/>
            <person name="Muraki A."/>
            <person name="Nakazaki N."/>
            <person name="Shimpo S."/>
            <person name="Sugimoto M."/>
            <person name="Takazawa M."/>
            <person name="Yamada M."/>
            <person name="Yasuda M."/>
            <person name="Tabata S."/>
        </authorList>
    </citation>
    <scope>NUCLEOTIDE SEQUENCE [LARGE SCALE GENOMIC DNA]</scope>
    <source>
        <strain>PCC 7120 / SAG 25.82 / UTEX 2576</strain>
    </source>
</reference>
<reference evidence="6" key="2">
    <citation type="journal article" date="2010" name="J. Bacteriol.">
        <title>A TRAP transporter for pyruvate and other monocarboxylate 2-oxoacids in the cyanobacterium Anabaena sp. strain PCC 7120.</title>
        <authorList>
            <person name="Pernil R."/>
            <person name="Herrero A."/>
            <person name="Flores E."/>
        </authorList>
    </citation>
    <scope>FUNCTION</scope>
    <scope>ACTIVITY REGULATION</scope>
    <scope>SUBUNIT</scope>
    <scope>DISRUPTION PHENOTYPE</scope>
    <source>
        <strain evidence="4">PCC 7120 / SAG 25.82 / UTEX 2576</strain>
    </source>
</reference>
<organism>
    <name type="scientific">Nostoc sp. (strain PCC 7120 / SAG 25.82 / UTEX 2576)</name>
    <dbReference type="NCBI Taxonomy" id="103690"/>
    <lineage>
        <taxon>Bacteria</taxon>
        <taxon>Bacillati</taxon>
        <taxon>Cyanobacteriota</taxon>
        <taxon>Cyanophyceae</taxon>
        <taxon>Nostocales</taxon>
        <taxon>Nostocaceae</taxon>
        <taxon>Nostoc</taxon>
    </lineage>
</organism>
<accession>Q8YSQ6</accession>
<protein>
    <recommendedName>
        <fullName evidence="2 5">Monocarboxylate 2-oxoacid-binding periplasmic protein all3028</fullName>
    </recommendedName>
    <alternativeName>
        <fullName evidence="7">Extracellular solute-binding protein</fullName>
    </alternativeName>
    <alternativeName>
        <fullName evidence="2">Extracytoplasmic solute receptor protein all3028</fullName>
    </alternativeName>
    <alternativeName>
        <fullName evidence="2 5">TRAP transporter monocarboxylate 2-oxoacid-binding subunit P</fullName>
    </alternativeName>
</protein>
<dbReference type="EMBL" id="BA000019">
    <property type="protein sequence ID" value="BAB74727.1"/>
    <property type="molecule type" value="Genomic_DNA"/>
</dbReference>
<dbReference type="PIR" id="AE2184">
    <property type="entry name" value="AE2184"/>
</dbReference>
<dbReference type="RefSeq" id="WP_010997179.1">
    <property type="nucleotide sequence ID" value="NZ_RSCN01000050.1"/>
</dbReference>
<dbReference type="SMR" id="Q8YSQ6"/>
<dbReference type="STRING" id="103690.gene:10495064"/>
<dbReference type="TCDB" id="2.A.56.3.3">
    <property type="family name" value="the tripartite atp-independent periplasmic transporter (trap-t) family"/>
</dbReference>
<dbReference type="KEGG" id="ana:all3028"/>
<dbReference type="eggNOG" id="COG4663">
    <property type="taxonomic scope" value="Bacteria"/>
</dbReference>
<dbReference type="OrthoDB" id="9780733at2"/>
<dbReference type="Proteomes" id="UP000002483">
    <property type="component" value="Chromosome"/>
</dbReference>
<dbReference type="GO" id="GO:0042597">
    <property type="term" value="C:periplasmic space"/>
    <property type="evidence" value="ECO:0007669"/>
    <property type="project" value="UniProtKB-SubCell"/>
</dbReference>
<dbReference type="GO" id="GO:0031317">
    <property type="term" value="C:tripartite ATP-independent periplasmic transporter complex"/>
    <property type="evidence" value="ECO:0000317"/>
    <property type="project" value="UniProtKB"/>
</dbReference>
<dbReference type="GO" id="GO:0046872">
    <property type="term" value="F:metal ion binding"/>
    <property type="evidence" value="ECO:0000250"/>
    <property type="project" value="UniProtKB"/>
</dbReference>
<dbReference type="GO" id="GO:0043177">
    <property type="term" value="F:organic acid binding"/>
    <property type="evidence" value="ECO:0000250"/>
    <property type="project" value="UniProtKB"/>
</dbReference>
<dbReference type="GO" id="GO:0005342">
    <property type="term" value="F:organic acid transmembrane transporter activity"/>
    <property type="evidence" value="ECO:0000315"/>
    <property type="project" value="UniProtKB"/>
</dbReference>
<dbReference type="GO" id="GO:0042803">
    <property type="term" value="F:protein homodimerization activity"/>
    <property type="evidence" value="ECO:0000250"/>
    <property type="project" value="UniProtKB"/>
</dbReference>
<dbReference type="GO" id="GO:0015849">
    <property type="term" value="P:organic acid transport"/>
    <property type="evidence" value="ECO:0000315"/>
    <property type="project" value="UniProtKB"/>
</dbReference>
<dbReference type="CDD" id="cd13682">
    <property type="entry name" value="PBP2_TRAP_alpha-ketoacid"/>
    <property type="match status" value="1"/>
</dbReference>
<dbReference type="Gene3D" id="3.40.190.170">
    <property type="entry name" value="Bacterial extracellular solute-binding protein, family 7"/>
    <property type="match status" value="1"/>
</dbReference>
<dbReference type="Gene3D" id="3.40.190.10">
    <property type="entry name" value="Periplasmic binding protein-like II"/>
    <property type="match status" value="1"/>
</dbReference>
<dbReference type="InterPro" id="IPR018389">
    <property type="entry name" value="DctP_fam"/>
</dbReference>
<dbReference type="InterPro" id="IPR026289">
    <property type="entry name" value="SBP_TakP-like"/>
</dbReference>
<dbReference type="InterPro" id="IPR041722">
    <property type="entry name" value="TakP/all3028"/>
</dbReference>
<dbReference type="InterPro" id="IPR038404">
    <property type="entry name" value="TRAP_DctP_sf"/>
</dbReference>
<dbReference type="NCBIfam" id="NF037995">
    <property type="entry name" value="TRAP_S1"/>
    <property type="match status" value="1"/>
</dbReference>
<dbReference type="PANTHER" id="PTHR33376">
    <property type="match status" value="1"/>
</dbReference>
<dbReference type="PANTHER" id="PTHR33376:SF5">
    <property type="entry name" value="EXTRACYTOPLASMIC SOLUTE RECEPTOR PROTEIN"/>
    <property type="match status" value="1"/>
</dbReference>
<dbReference type="Pfam" id="PF03480">
    <property type="entry name" value="DctP"/>
    <property type="match status" value="1"/>
</dbReference>
<dbReference type="PIRSF" id="PIRSF039026">
    <property type="entry name" value="SiaP"/>
    <property type="match status" value="1"/>
</dbReference>
<dbReference type="SUPFAM" id="SSF53850">
    <property type="entry name" value="Periplasmic binding protein-like II"/>
    <property type="match status" value="1"/>
</dbReference>